<protein>
    <recommendedName>
        <fullName>Skp-like protein</fullName>
    </recommendedName>
</protein>
<organism>
    <name type="scientific">Chlamydia pneumoniae</name>
    <name type="common">Chlamydophila pneumoniae</name>
    <dbReference type="NCBI Taxonomy" id="83558"/>
    <lineage>
        <taxon>Bacteria</taxon>
        <taxon>Pseudomonadati</taxon>
        <taxon>Chlamydiota</taxon>
        <taxon>Chlamydiia</taxon>
        <taxon>Chlamydiales</taxon>
        <taxon>Chlamydiaceae</taxon>
        <taxon>Chlamydia/Chlamydophila group</taxon>
        <taxon>Chlamydia</taxon>
    </lineage>
</organism>
<name>SKPL_CHLPN</name>
<keyword id="KW-0732">Signal</keyword>
<evidence type="ECO:0000255" key="1"/>
<evidence type="ECO:0000305" key="2"/>
<dbReference type="EMBL" id="AE001363">
    <property type="protein sequence ID" value="AAD18450.1"/>
    <property type="molecule type" value="Genomic_DNA"/>
</dbReference>
<dbReference type="EMBL" id="AE002161">
    <property type="protein sequence ID" value="AAF38295.1"/>
    <property type="molecule type" value="Genomic_DNA"/>
</dbReference>
<dbReference type="EMBL" id="BA000008">
    <property type="protein sequence ID" value="BAA98511.1"/>
    <property type="molecule type" value="Genomic_DNA"/>
</dbReference>
<dbReference type="EMBL" id="AE009440">
    <property type="protein sequence ID" value="AAP98243.1"/>
    <property type="molecule type" value="Genomic_DNA"/>
</dbReference>
<dbReference type="PIR" id="E72094">
    <property type="entry name" value="E72094"/>
</dbReference>
<dbReference type="PIR" id="E86528">
    <property type="entry name" value="E86528"/>
</dbReference>
<dbReference type="RefSeq" id="NP_224506.1">
    <property type="nucleotide sequence ID" value="NC_000922.1"/>
</dbReference>
<dbReference type="RefSeq" id="WP_010882949.1">
    <property type="nucleotide sequence ID" value="NZ_LN847257.1"/>
</dbReference>
<dbReference type="SMR" id="Q9Z8N7"/>
<dbReference type="STRING" id="406984.CPK_ORF00809"/>
<dbReference type="GeneID" id="45050350"/>
<dbReference type="KEGG" id="cpa:CP_0457"/>
<dbReference type="KEGG" id="cpj:CPj0301"/>
<dbReference type="KEGG" id="cpn:CPn_0301"/>
<dbReference type="KEGG" id="cpt:CpB0310"/>
<dbReference type="PATRIC" id="fig|115713.3.peg.335"/>
<dbReference type="eggNOG" id="COG2825">
    <property type="taxonomic scope" value="Bacteria"/>
</dbReference>
<dbReference type="HOGENOM" id="CLU_127164_0_0_0"/>
<dbReference type="OMA" id="CITESKY"/>
<dbReference type="OrthoDB" id="17869at2"/>
<dbReference type="Proteomes" id="UP000000583">
    <property type="component" value="Chromosome"/>
</dbReference>
<dbReference type="Proteomes" id="UP000000801">
    <property type="component" value="Chromosome"/>
</dbReference>
<dbReference type="GO" id="GO:0005829">
    <property type="term" value="C:cytosol"/>
    <property type="evidence" value="ECO:0007669"/>
    <property type="project" value="TreeGrafter"/>
</dbReference>
<dbReference type="GO" id="GO:0051082">
    <property type="term" value="F:unfolded protein binding"/>
    <property type="evidence" value="ECO:0007669"/>
    <property type="project" value="InterPro"/>
</dbReference>
<dbReference type="GO" id="GO:0061077">
    <property type="term" value="P:chaperone-mediated protein folding"/>
    <property type="evidence" value="ECO:0007669"/>
    <property type="project" value="TreeGrafter"/>
</dbReference>
<dbReference type="GO" id="GO:0050821">
    <property type="term" value="P:protein stabilization"/>
    <property type="evidence" value="ECO:0007669"/>
    <property type="project" value="TreeGrafter"/>
</dbReference>
<dbReference type="Gene3D" id="3.30.910.20">
    <property type="entry name" value="Skp domain"/>
    <property type="match status" value="1"/>
</dbReference>
<dbReference type="InterPro" id="IPR005632">
    <property type="entry name" value="Chaperone_Skp"/>
</dbReference>
<dbReference type="InterPro" id="IPR024930">
    <property type="entry name" value="Skp_dom_sf"/>
</dbReference>
<dbReference type="PANTHER" id="PTHR35089">
    <property type="entry name" value="CHAPERONE PROTEIN SKP"/>
    <property type="match status" value="1"/>
</dbReference>
<dbReference type="PANTHER" id="PTHR35089:SF1">
    <property type="entry name" value="CHAPERONE PROTEIN SKP"/>
    <property type="match status" value="1"/>
</dbReference>
<dbReference type="Pfam" id="PF03938">
    <property type="entry name" value="OmpH"/>
    <property type="match status" value="1"/>
</dbReference>
<dbReference type="SMART" id="SM00935">
    <property type="entry name" value="OmpH"/>
    <property type="match status" value="1"/>
</dbReference>
<dbReference type="SUPFAM" id="SSF111384">
    <property type="entry name" value="OmpH-like"/>
    <property type="match status" value="1"/>
</dbReference>
<reference key="1">
    <citation type="journal article" date="1999" name="Nat. Genet.">
        <title>Comparative genomes of Chlamydia pneumoniae and C. trachomatis.</title>
        <authorList>
            <person name="Kalman S."/>
            <person name="Mitchell W.P."/>
            <person name="Marathe R."/>
            <person name="Lammel C.J."/>
            <person name="Fan J."/>
            <person name="Hyman R.W."/>
            <person name="Olinger L."/>
            <person name="Grimwood J."/>
            <person name="Davis R.W."/>
            <person name="Stephens R.S."/>
        </authorList>
    </citation>
    <scope>NUCLEOTIDE SEQUENCE [LARGE SCALE GENOMIC DNA]</scope>
    <source>
        <strain>CWL029</strain>
    </source>
</reference>
<reference key="2">
    <citation type="journal article" date="2000" name="Nucleic Acids Res.">
        <title>Genome sequences of Chlamydia trachomatis MoPn and Chlamydia pneumoniae AR39.</title>
        <authorList>
            <person name="Read T.D."/>
            <person name="Brunham R.C."/>
            <person name="Shen C."/>
            <person name="Gill S.R."/>
            <person name="Heidelberg J.F."/>
            <person name="White O."/>
            <person name="Hickey E.K."/>
            <person name="Peterson J.D."/>
            <person name="Utterback T.R."/>
            <person name="Berry K.J."/>
            <person name="Bass S."/>
            <person name="Linher K.D."/>
            <person name="Weidman J.F."/>
            <person name="Khouri H.M."/>
            <person name="Craven B."/>
            <person name="Bowman C."/>
            <person name="Dodson R.J."/>
            <person name="Gwinn M.L."/>
            <person name="Nelson W.C."/>
            <person name="DeBoy R.T."/>
            <person name="Kolonay J.F."/>
            <person name="McClarty G."/>
            <person name="Salzberg S.L."/>
            <person name="Eisen J.A."/>
            <person name="Fraser C.M."/>
        </authorList>
    </citation>
    <scope>NUCLEOTIDE SEQUENCE [LARGE SCALE GENOMIC DNA]</scope>
    <source>
        <strain>AR39</strain>
    </source>
</reference>
<reference key="3">
    <citation type="journal article" date="2000" name="Nucleic Acids Res.">
        <title>Comparison of whole genome sequences of Chlamydia pneumoniae J138 from Japan and CWL029 from USA.</title>
        <authorList>
            <person name="Shirai M."/>
            <person name="Hirakawa H."/>
            <person name="Kimoto M."/>
            <person name="Tabuchi M."/>
            <person name="Kishi F."/>
            <person name="Ouchi K."/>
            <person name="Shiba T."/>
            <person name="Ishii K."/>
            <person name="Hattori M."/>
            <person name="Kuhara S."/>
            <person name="Nakazawa T."/>
        </authorList>
    </citation>
    <scope>NUCLEOTIDE SEQUENCE [LARGE SCALE GENOMIC DNA]</scope>
    <source>
        <strain>J138</strain>
    </source>
</reference>
<reference key="4">
    <citation type="submission" date="2002-05" db="EMBL/GenBank/DDBJ databases">
        <title>The genome sequence of Chlamydia pneumoniae TW183 and comparison with other Chlamydia strains based on whole genome sequence analysis.</title>
        <authorList>
            <person name="Geng M.M."/>
            <person name="Schuhmacher A."/>
            <person name="Muehldorfer I."/>
            <person name="Bensch K.W."/>
            <person name="Schaefer K.P."/>
            <person name="Schneider S."/>
            <person name="Pohl T."/>
            <person name="Essig A."/>
            <person name="Marre R."/>
            <person name="Melchers K."/>
        </authorList>
    </citation>
    <scope>NUCLEOTIDE SEQUENCE [LARGE SCALE GENOMIC DNA]</scope>
    <source>
        <strain>TW-183</strain>
    </source>
</reference>
<accession>Q9Z8N7</accession>
<proteinExistence type="inferred from homology"/>
<feature type="signal peptide" evidence="1">
    <location>
        <begin position="1"/>
        <end position="21"/>
    </location>
</feature>
<feature type="chain" id="PRO_0000020187" description="Skp-like protein">
    <location>
        <begin position="22"/>
        <end position="171"/>
    </location>
</feature>
<comment type="similarity">
    <text evidence="2">Belongs to the Skp family.</text>
</comment>
<sequence>MKKLLFSTFLLVLGSTSAAHANLGYVNLKRCLEESDLGKKETEELEAMKQQFVKNAEKIEEELTSIYNKLQDEDYMESLSDSASEELRKKFEDLSGEYNAYQSQYYQSINQSNVKRIQKLIQEVKIAAESVRSKEKLEAILNEEAVLAIAPGTDKTTEIIAILNESFKKQN</sequence>
<gene>
    <name type="ordered locus">CPn_0301</name>
    <name type="ordered locus">CP_0457</name>
    <name type="ordered locus">CPj0301</name>
    <name type="ordered locus">CpB0310</name>
</gene>